<feature type="chain" id="PRO_0000056992" description="RNA pyrophosphohydrolase">
    <location>
        <begin position="1"/>
        <end position="170"/>
    </location>
</feature>
<feature type="domain" description="Nudix hydrolase">
    <location>
        <begin position="11"/>
        <end position="164"/>
    </location>
</feature>
<feature type="short sequence motif" description="Nudix box">
    <location>
        <begin position="52"/>
        <end position="73"/>
    </location>
</feature>
<comment type="function">
    <text evidence="1">Accelerates the degradation of transcripts by removing pyrophosphate from the 5'-end of triphosphorylated RNA, leading to a more labile monophosphorylated state that can stimulate subsequent ribonuclease cleavage (By similarity). Catalyzes the hydrolysis of diadenosine tetra-, penta-, or hexa-phosphate with the departure of ATP as leaving group. Preferred substrate is Ap4A. Also acts on diguanosine tetra- and penta-phosphate at a lesser extent. Required with IalB for erythrocytes invasion.</text>
</comment>
<comment type="cofactor">
    <cofactor>
        <name>Zn(2+)</name>
        <dbReference type="ChEBI" id="CHEBI:29105"/>
    </cofactor>
    <cofactor>
        <name>Mg(2+)</name>
        <dbReference type="ChEBI" id="CHEBI:18420"/>
    </cofactor>
    <cofactor>
        <name>Mn(2+)</name>
        <dbReference type="ChEBI" id="CHEBI:29035"/>
    </cofactor>
    <text>Binds 2 divalent metal ions. Zinc, magnesium or manganese.</text>
</comment>
<comment type="subunit">
    <text>Monomer.</text>
</comment>
<comment type="similarity">
    <text evidence="2">Belongs to the Nudix hydrolase family. RppH subfamily.</text>
</comment>
<keyword id="KW-0378">Hydrolase</keyword>
<keyword id="KW-0460">Magnesium</keyword>
<keyword id="KW-0464">Manganese</keyword>
<keyword id="KW-0843">Virulence</keyword>
<keyword id="KW-0862">Zinc</keyword>
<accession>P35640</accession>
<accession>A1URP2</accession>
<name>RPPH_BARBK</name>
<protein>
    <recommendedName>
        <fullName>RNA pyrophosphohydrolase</fullName>
        <ecNumber>3.6.1.-</ecNumber>
    </recommendedName>
    <alternativeName>
        <fullName>(Di)nucleoside polyphosphate hydrolase</fullName>
    </alternativeName>
    <alternativeName>
        <fullName>Ap4A pyrophosphatase</fullName>
    </alternativeName>
    <alternativeName>
        <fullName>Invasion protein A</fullName>
    </alternativeName>
    <alternativeName>
        <fullName>Invasion-associated locus protein A</fullName>
    </alternativeName>
</protein>
<organism>
    <name type="scientific">Bartonella bacilliformis (strain ATCC 35685 / KC583 / Herrer 020/F12,63)</name>
    <dbReference type="NCBI Taxonomy" id="360095"/>
    <lineage>
        <taxon>Bacteria</taxon>
        <taxon>Pseudomonadati</taxon>
        <taxon>Pseudomonadota</taxon>
        <taxon>Alphaproteobacteria</taxon>
        <taxon>Hyphomicrobiales</taxon>
        <taxon>Bartonellaceae</taxon>
        <taxon>Bartonella</taxon>
    </lineage>
</organism>
<reference key="1">
    <citation type="journal article" date="1995" name="Infect. Immun.">
        <title>Characterization of a two-gene locus from Bartonella bacilliformis associated with the ability to invade human erythrocytes.</title>
        <authorList>
            <person name="Mitchell S.J."/>
            <person name="Minnick M.F."/>
        </authorList>
    </citation>
    <scope>NUCLEOTIDE SEQUENCE [GENOMIC DNA]</scope>
</reference>
<reference key="2">
    <citation type="submission" date="2006-12" db="EMBL/GenBank/DDBJ databases">
        <authorList>
            <person name="Hendrix L."/>
            <person name="Mohamoud Y."/>
            <person name="Radune D."/>
            <person name="Shvartsbeyn A."/>
            <person name="Daugherty S."/>
            <person name="Dodson R."/>
            <person name="Durkin A.S."/>
            <person name="Harkins D."/>
            <person name="Huot H."/>
            <person name="Kothari S.P."/>
            <person name="Madupu R."/>
            <person name="Li J."/>
            <person name="Nelson W.C."/>
            <person name="Shrivastava S."/>
            <person name="Giglio M.G."/>
            <person name="Haft D."/>
            <person name="Selengut J."/>
            <person name="Fraser-Ligget C."/>
            <person name="Seshadri R."/>
        </authorList>
    </citation>
    <scope>NUCLEOTIDE SEQUENCE [LARGE SCALE GENOMIC DNA]</scope>
    <source>
        <strain>ATCC 35685 / KC583 / Herrer 020/F12,63</strain>
    </source>
</reference>
<reference key="3">
    <citation type="journal article" date="1999" name="J. Biol. Chem.">
        <title>The gene, ialA, associated with the invasion of human erythrocytes by Bartonella bacilliformis, designates a nudix hydrolase active on dinucleoside 5'-polyphosphates.</title>
        <authorList>
            <person name="Conyers G.B."/>
            <person name="Bessman M.J."/>
        </authorList>
    </citation>
    <scope>CHARACTERIZATION</scope>
</reference>
<reference key="4">
    <citation type="journal article" date="2000" name="Biochemistry">
        <title>Metal requirements of a diadenosine pyrophosphatase from Bartonella bacilliformis: magnetic resonance and kinetic studies of the role of Mn2+.</title>
        <authorList>
            <person name="Conyers G.B."/>
            <person name="Wu G."/>
            <person name="Bessman M.J."/>
            <person name="Mildvan A.S."/>
        </authorList>
    </citation>
    <scope>CHARACTERIZATION</scope>
</reference>
<dbReference type="EC" id="3.6.1.-"/>
<dbReference type="EMBL" id="L25276">
    <property type="protein sequence ID" value="AAA87326.1"/>
    <property type="molecule type" value="Genomic_DNA"/>
</dbReference>
<dbReference type="EMBL" id="CP000524">
    <property type="protein sequence ID" value="ABM45640.1"/>
    <property type="molecule type" value="Genomic_DNA"/>
</dbReference>
<dbReference type="PIR" id="I40045">
    <property type="entry name" value="I40045"/>
</dbReference>
<dbReference type="RefSeq" id="WP_005766249.1">
    <property type="nucleotide sequence ID" value="NC_008783.1"/>
</dbReference>
<dbReference type="SMR" id="P35640"/>
<dbReference type="STRING" id="360095.BARBAKC583_0325"/>
<dbReference type="GeneID" id="4685025"/>
<dbReference type="KEGG" id="bbk:BARBAKC583_0325"/>
<dbReference type="PATRIC" id="fig|360095.6.peg.309"/>
<dbReference type="eggNOG" id="COG0494">
    <property type="taxonomic scope" value="Bacteria"/>
</dbReference>
<dbReference type="HOGENOM" id="CLU_087195_3_0_5"/>
<dbReference type="OrthoDB" id="9816040at2"/>
<dbReference type="Proteomes" id="UP000000643">
    <property type="component" value="Chromosome"/>
</dbReference>
<dbReference type="GO" id="GO:0034432">
    <property type="term" value="F:bis(5'-adenosyl)-pentaphosphatase activity"/>
    <property type="evidence" value="ECO:0007669"/>
    <property type="project" value="TreeGrafter"/>
</dbReference>
<dbReference type="GO" id="GO:0008893">
    <property type="term" value="F:guanosine-3',5'-bis(diphosphate) 3'-diphosphatase activity"/>
    <property type="evidence" value="ECO:0007669"/>
    <property type="project" value="TreeGrafter"/>
</dbReference>
<dbReference type="GO" id="GO:0006753">
    <property type="term" value="P:nucleoside phosphate metabolic process"/>
    <property type="evidence" value="ECO:0007669"/>
    <property type="project" value="TreeGrafter"/>
</dbReference>
<dbReference type="GO" id="GO:0019693">
    <property type="term" value="P:ribose phosphate metabolic process"/>
    <property type="evidence" value="ECO:0007669"/>
    <property type="project" value="TreeGrafter"/>
</dbReference>
<dbReference type="CDD" id="cd03671">
    <property type="entry name" value="NUDIX_Ap4A_hydrolase_plant_like"/>
    <property type="match status" value="1"/>
</dbReference>
<dbReference type="Gene3D" id="3.90.79.10">
    <property type="entry name" value="Nucleoside Triphosphate Pyrophosphohydrolase"/>
    <property type="match status" value="1"/>
</dbReference>
<dbReference type="HAMAP" id="MF_00298">
    <property type="entry name" value="Nudix_RppH"/>
    <property type="match status" value="1"/>
</dbReference>
<dbReference type="InterPro" id="IPR020476">
    <property type="entry name" value="Nudix_hydrolase"/>
</dbReference>
<dbReference type="InterPro" id="IPR015797">
    <property type="entry name" value="NUDIX_hydrolase-like_dom_sf"/>
</dbReference>
<dbReference type="InterPro" id="IPR020084">
    <property type="entry name" value="NUDIX_hydrolase_CS"/>
</dbReference>
<dbReference type="InterPro" id="IPR000086">
    <property type="entry name" value="NUDIX_hydrolase_dom"/>
</dbReference>
<dbReference type="InterPro" id="IPR022927">
    <property type="entry name" value="RppH"/>
</dbReference>
<dbReference type="NCBIfam" id="NF001938">
    <property type="entry name" value="PRK00714.1-5"/>
    <property type="match status" value="1"/>
</dbReference>
<dbReference type="PANTHER" id="PTHR11839:SF22">
    <property type="entry name" value="NUDIX HYDROLASE 26, CHLOROPLASTIC"/>
    <property type="match status" value="1"/>
</dbReference>
<dbReference type="PANTHER" id="PTHR11839">
    <property type="entry name" value="UDP/ADP-SUGAR PYROPHOSPHATASE"/>
    <property type="match status" value="1"/>
</dbReference>
<dbReference type="Pfam" id="PF00293">
    <property type="entry name" value="NUDIX"/>
    <property type="match status" value="1"/>
</dbReference>
<dbReference type="PRINTS" id="PR00502">
    <property type="entry name" value="NUDIXFAMILY"/>
</dbReference>
<dbReference type="SUPFAM" id="SSF55811">
    <property type="entry name" value="Nudix"/>
    <property type="match status" value="1"/>
</dbReference>
<dbReference type="PROSITE" id="PS51462">
    <property type="entry name" value="NUDIX"/>
    <property type="match status" value="1"/>
</dbReference>
<dbReference type="PROSITE" id="PS00893">
    <property type="entry name" value="NUDIX_BOX"/>
    <property type="match status" value="1"/>
</dbReference>
<evidence type="ECO:0000250" key="1"/>
<evidence type="ECO:0000305" key="2"/>
<sequence>MDTMVDFKTLPYRKGVGIVVFNREGQVWIGRRLITSSHTYAEVSKLWQFPQGGIDEGEEPLDAARRELYEETGMRSVNLIKEVQDWFCYDFPQELIGHVLNNQYRGQMQKWFAFQFIGETSEIVINSPENSNKAEFDQWKWINLEVLPSIVVSFKRHVYMKVVHEFRNII</sequence>
<proteinExistence type="evidence at protein level"/>
<gene>
    <name type="primary">rppH</name>
    <name type="synonym">ialA</name>
    <name type="synonym">invA</name>
    <name type="synonym">nudH</name>
    <name type="ordered locus">BARBAKC583_0325</name>
</gene>